<comment type="function">
    <text evidence="1">Type-I myosin implicated in the organization of the actin cytoskeleton. Required for proper actin cytoskeleton polarization. At the cell cortex, assembles in patch-like structures together with proteins from the actin-polymerizing machinery and promotes actin assembly. Functions as actin nucleation-promoting factor (NPF) for the Arp2/3 complex (By similarity).</text>
</comment>
<comment type="subcellular location">
    <subcellularLocation>
        <location evidence="1">Cytoplasm</location>
        <location evidence="1">Cytoskeleton</location>
        <location evidence="1">Actin patch</location>
    </subcellularLocation>
</comment>
<comment type="domain">
    <text evidence="1">The myosin motor domain displays actin-stimulated ATPase activity and generates a mechanochemical force.</text>
</comment>
<comment type="domain">
    <text evidence="1">The tail domain participates in molecular interactions that specify the role of the motor domain (By similarity). It is composed of several tail homology (TH) domains, namely a putative phospholipid-binding myosin tail domain (also named TH1), an Ala- and Pro-rich domain (TH2), followed by an SH3 domain and a C-terminal acidic domain (TH3).</text>
</comment>
<comment type="PTM">
    <text evidence="1">Phosphorylation of the TEDS site (Ser-360) is required for the polarization of the actin cytoskeleton. Phosphorylation probably activates the myosin-I ATPase activity (By similarity).</text>
</comment>
<comment type="similarity">
    <text evidence="7">Belongs to the TRAFAC class myosin-kinesin ATPase superfamily. Myosin family.</text>
</comment>
<comment type="sequence caution" evidence="7">
    <conflict type="erroneous gene model prediction">
        <sequence resource="EMBL-CDS" id="EFI28693"/>
    </conflict>
</comment>
<organism>
    <name type="scientific">Coprinopsis cinerea (strain Okayama-7 / 130 / ATCC MYA-4618 / FGSC 9003)</name>
    <name type="common">Inky cap fungus</name>
    <name type="synonym">Hormographiella aspergillata</name>
    <dbReference type="NCBI Taxonomy" id="240176"/>
    <lineage>
        <taxon>Eukaryota</taxon>
        <taxon>Fungi</taxon>
        <taxon>Dikarya</taxon>
        <taxon>Basidiomycota</taxon>
        <taxon>Agaricomycotina</taxon>
        <taxon>Agaricomycetes</taxon>
        <taxon>Agaricomycetidae</taxon>
        <taxon>Agaricales</taxon>
        <taxon>Agaricineae</taxon>
        <taxon>Psathyrellaceae</taxon>
        <taxon>Coprinopsis</taxon>
    </lineage>
</organism>
<evidence type="ECO:0000250" key="1"/>
<evidence type="ECO:0000255" key="2"/>
<evidence type="ECO:0000255" key="3">
    <source>
        <dbReference type="PROSITE-ProRule" id="PRU00192"/>
    </source>
</evidence>
<evidence type="ECO:0000255" key="4">
    <source>
        <dbReference type="PROSITE-ProRule" id="PRU00782"/>
    </source>
</evidence>
<evidence type="ECO:0000255" key="5">
    <source>
        <dbReference type="PROSITE-ProRule" id="PRU01093"/>
    </source>
</evidence>
<evidence type="ECO:0000256" key="6">
    <source>
        <dbReference type="SAM" id="MobiDB-lite"/>
    </source>
</evidence>
<evidence type="ECO:0000305" key="7"/>
<sequence length="1277" mass="140501">MAPSKKAGKKVTPKKAAGNNAKSKVAKADWKEGFKKKQVGVTDMTLLTTISNESINENLQKRWTNGEIYTYIGAVLISVNPFRDLGIYTDEVLQRYRGKNRLEVPPHVFSIAESAYYNMNAYHENQCVIISGESGAGKTEAAKQIMQYIAAVSGGQDSGIQEIKDMVLATNPLLESFGCAKTLRNNNSSRHGKYLEIMFNDRGEPVGAQITNYLLEKGRVVGQIENERNFHIFYQFTKAASDEQREAFGLQGPDAYAYTSMSNCLDVQDIDDTRDFEGTINAMQIIGLSPEEQNEIFKMLATILWLGNVQFDENEEGNSVISDTGVTDFVAYLMEVDAATVQKALTTRVMETTRGGRRGSVYDVPLNPSQATSGRDALSKAIYNNLFEWIVAKINVSLKTRSAYSHIIGILDIFGFEIFEDNSFEQLCINYVNEKLQQIFIELTLKTEQEEYVREQIKWTPIKFFNNKVVCDLIEERRPPGIFAALNDACATAHADPTAADNSFIQRSAGLSSNGHFESRGAQFLVRHYAGDVMYNVAGMTDKNKDSLIKDLLDLIGTSGNAFLQNLFPDRPDPNSKKRPPTASDRIKQSAGALVDKLMKSQPSYIRTIKPNGNRSPSEYDTKAILHQIKYLGLQENIRVRRAGFAYRNTFEKMVERFYLLSPKTSYAGEYIWTGDAKSGCEQILKDTGIAKDEWQMGVTKAFIKNPETLFALETMRDRYWHNMAARIQRAFRNYMRYKHECARRIQRFWKNNKEALVYAQVRDYGHQLLAGRKERRRFSLLSYRRFMGDYLDISGKSSLGEEIGEACSLGREPVKFSASARLLVSKLGRSSKPSPRYIVLTPKAVYIVIVTAKDGQAMFSLERKIALVTIKSIQMSTLRDDWFTLNLGPTEEGDPVLSCYFKTEFVTHLMQLTQAGINFNIAPTIEYTKKKEKKAQIKFVKDETIPKDDVYKSHTVHVPSGEPADSVSRPPAKRKAGVVRPITQGKLLRAGGPSKPNNSRPRPTAQPLPGQSKPAVATPSVVSTPAAAAVVSKPKPAASTPAAVRAPAVTPAARSVPPPPPPPPPARAEPEKEMYRAKFDFQGQEGEMSLTKDDEVELIEKDENGWWLVKKDGVEAWAPYNYLERIAPKAAPAPPPPPARPRPTSTVPKPPLSSTTADASAKPVAVFPGMGASNGGPTPWKKSAATTDSTPNSSRPGSAAAKVPPPVAAKPKPPVVAPKPGVPKPGGKPALPTTARPAPSGGGAAAGRLGGGGGGPGQLDLAAALAKRAQRIADED</sequence>
<name>MYO1_COPC7</name>
<reference key="1">
    <citation type="journal article" date="2010" name="Proc. Natl. Acad. Sci. U.S.A.">
        <title>Insights into evolution of multicellular fungi from the assembled chromosomes of the mushroom Coprinopsis cinerea (Coprinus cinereus).</title>
        <authorList>
            <person name="Stajich J.E."/>
            <person name="Wilke S.K."/>
            <person name="Ahren D."/>
            <person name="Au C.H."/>
            <person name="Birren B.W."/>
            <person name="Borodovsky M."/>
            <person name="Burns C."/>
            <person name="Canbaeck B."/>
            <person name="Casselton L.A."/>
            <person name="Cheng C.K."/>
            <person name="Deng J."/>
            <person name="Dietrich F.S."/>
            <person name="Fargo D.C."/>
            <person name="Farman M.L."/>
            <person name="Gathman A.C."/>
            <person name="Goldberg J."/>
            <person name="Guigo R."/>
            <person name="Hoegger P.J."/>
            <person name="Hooker J.B."/>
            <person name="Huggins A."/>
            <person name="James T.Y."/>
            <person name="Kamada T."/>
            <person name="Kilaru S."/>
            <person name="Kodira C."/>
            <person name="Kuees U."/>
            <person name="Kupfer D."/>
            <person name="Kwan H.S."/>
            <person name="Lomsadze A."/>
            <person name="Li W."/>
            <person name="Lilly W.W."/>
            <person name="Ma L.-J."/>
            <person name="Mackey A.J."/>
            <person name="Manning G."/>
            <person name="Martin F."/>
            <person name="Muraguchi H."/>
            <person name="Natvig D.O."/>
            <person name="Palmerini H."/>
            <person name="Ramesh M.A."/>
            <person name="Rehmeyer C.J."/>
            <person name="Roe B.A."/>
            <person name="Shenoy N."/>
            <person name="Stanke M."/>
            <person name="Ter-Hovhannisyan V."/>
            <person name="Tunlid A."/>
            <person name="Velagapudi R."/>
            <person name="Vision T.J."/>
            <person name="Zeng Q."/>
            <person name="Zolan M.E."/>
            <person name="Pukkila P.J."/>
        </authorList>
    </citation>
    <scope>NUCLEOTIDE SEQUENCE [LARGE SCALE GENOMIC DNA]</scope>
    <source>
        <strain>Okayama-7 / 130 / ATCC MYA-4618 / FGSC 9003</strain>
    </source>
</reference>
<proteinExistence type="inferred from homology"/>
<accession>A8N2Y6</accession>
<accession>D6RK57</accession>
<feature type="chain" id="PRO_0000338548" description="Myosin-1">
    <location>
        <begin position="1"/>
        <end position="1277"/>
    </location>
</feature>
<feature type="domain" description="Myosin motor" evidence="4">
    <location>
        <begin position="39"/>
        <end position="718"/>
    </location>
</feature>
<feature type="domain" description="IQ 1">
    <location>
        <begin position="722"/>
        <end position="742"/>
    </location>
</feature>
<feature type="domain" description="IQ 2">
    <location>
        <begin position="743"/>
        <end position="768"/>
    </location>
</feature>
<feature type="domain" description="TH1" evidence="5">
    <location>
        <begin position="776"/>
        <end position="965"/>
    </location>
</feature>
<feature type="domain" description="SH3" evidence="3">
    <location>
        <begin position="1071"/>
        <end position="1129"/>
    </location>
</feature>
<feature type="region of interest" description="Disordered" evidence="6">
    <location>
        <begin position="1"/>
        <end position="27"/>
    </location>
</feature>
<feature type="region of interest" description="Actin-binding" evidence="1">
    <location>
        <begin position="407"/>
        <end position="489"/>
    </location>
</feature>
<feature type="region of interest" description="Disordered" evidence="6">
    <location>
        <begin position="567"/>
        <end position="587"/>
    </location>
</feature>
<feature type="region of interest" description="Disordered" evidence="6">
    <location>
        <begin position="952"/>
        <end position="1072"/>
    </location>
</feature>
<feature type="region of interest" description="Disordered" evidence="6">
    <location>
        <begin position="1129"/>
        <end position="1259"/>
    </location>
</feature>
<feature type="compositionally biased region" description="Basic residues" evidence="6">
    <location>
        <begin position="1"/>
        <end position="13"/>
    </location>
</feature>
<feature type="compositionally biased region" description="Low complexity" evidence="6">
    <location>
        <begin position="1015"/>
        <end position="1056"/>
    </location>
</feature>
<feature type="compositionally biased region" description="Pro residues" evidence="6">
    <location>
        <begin position="1057"/>
        <end position="1068"/>
    </location>
</feature>
<feature type="compositionally biased region" description="Pro residues" evidence="6">
    <location>
        <begin position="1132"/>
        <end position="1142"/>
    </location>
</feature>
<feature type="compositionally biased region" description="Polar residues" evidence="6">
    <location>
        <begin position="1145"/>
        <end position="1159"/>
    </location>
</feature>
<feature type="compositionally biased region" description="Polar residues" evidence="6">
    <location>
        <begin position="1185"/>
        <end position="1197"/>
    </location>
</feature>
<feature type="compositionally biased region" description="Pro residues" evidence="6">
    <location>
        <begin position="1204"/>
        <end position="1224"/>
    </location>
</feature>
<feature type="compositionally biased region" description="Low complexity" evidence="6">
    <location>
        <begin position="1226"/>
        <end position="1240"/>
    </location>
</feature>
<feature type="compositionally biased region" description="Gly residues" evidence="6">
    <location>
        <begin position="1241"/>
        <end position="1258"/>
    </location>
</feature>
<feature type="binding site" evidence="2">
    <location>
        <begin position="132"/>
        <end position="139"/>
    </location>
    <ligand>
        <name>ATP</name>
        <dbReference type="ChEBI" id="CHEBI:30616"/>
    </ligand>
</feature>
<feature type="modified residue" description="Phosphoserine" evidence="1">
    <location>
        <position position="360"/>
    </location>
</feature>
<dbReference type="EMBL" id="AACS02000001">
    <property type="protein sequence ID" value="EFI28693.1"/>
    <property type="status" value="ALT_SEQ"/>
    <property type="molecule type" value="Genomic_DNA"/>
</dbReference>
<dbReference type="RefSeq" id="XP_002912187.1">
    <property type="nucleotide sequence ID" value="XM_002912141.1"/>
</dbReference>
<dbReference type="SMR" id="A8N2Y6"/>
<dbReference type="FunCoup" id="A8N2Y6">
    <property type="interactions" value="102"/>
</dbReference>
<dbReference type="STRING" id="240176.A8N2Y6"/>
<dbReference type="GeneID" id="6017031"/>
<dbReference type="KEGG" id="cci:CC1G_13719"/>
<dbReference type="eggNOG" id="KOG0162">
    <property type="taxonomic scope" value="Eukaryota"/>
</dbReference>
<dbReference type="eggNOG" id="KOG4151">
    <property type="taxonomic scope" value="Eukaryota"/>
</dbReference>
<dbReference type="HOGENOM" id="CLU_000192_7_6_1"/>
<dbReference type="InParanoid" id="A8N2Y6"/>
<dbReference type="OrthoDB" id="6108017at2759"/>
<dbReference type="Proteomes" id="UP000001861">
    <property type="component" value="Unassembled WGS sequence"/>
</dbReference>
<dbReference type="GO" id="GO:0030479">
    <property type="term" value="C:actin cortical patch"/>
    <property type="evidence" value="ECO:0007669"/>
    <property type="project" value="UniProtKB-SubCell"/>
</dbReference>
<dbReference type="GO" id="GO:0051286">
    <property type="term" value="C:cell tip"/>
    <property type="evidence" value="ECO:0007669"/>
    <property type="project" value="TreeGrafter"/>
</dbReference>
<dbReference type="GO" id="GO:0016459">
    <property type="term" value="C:myosin complex"/>
    <property type="evidence" value="ECO:0007669"/>
    <property type="project" value="UniProtKB-KW"/>
</dbReference>
<dbReference type="GO" id="GO:0005886">
    <property type="term" value="C:plasma membrane"/>
    <property type="evidence" value="ECO:0007669"/>
    <property type="project" value="TreeGrafter"/>
</dbReference>
<dbReference type="GO" id="GO:0051015">
    <property type="term" value="F:actin filament binding"/>
    <property type="evidence" value="ECO:0007669"/>
    <property type="project" value="TreeGrafter"/>
</dbReference>
<dbReference type="GO" id="GO:0005524">
    <property type="term" value="F:ATP binding"/>
    <property type="evidence" value="ECO:0007669"/>
    <property type="project" value="UniProtKB-KW"/>
</dbReference>
<dbReference type="GO" id="GO:0016787">
    <property type="term" value="F:hydrolase activity"/>
    <property type="evidence" value="ECO:0007669"/>
    <property type="project" value="UniProtKB-KW"/>
</dbReference>
<dbReference type="GO" id="GO:0000146">
    <property type="term" value="F:microfilament motor activity"/>
    <property type="evidence" value="ECO:0007669"/>
    <property type="project" value="TreeGrafter"/>
</dbReference>
<dbReference type="GO" id="GO:0051666">
    <property type="term" value="P:actin cortical patch localization"/>
    <property type="evidence" value="ECO:0007669"/>
    <property type="project" value="TreeGrafter"/>
</dbReference>
<dbReference type="GO" id="GO:0007015">
    <property type="term" value="P:actin filament organization"/>
    <property type="evidence" value="ECO:0007669"/>
    <property type="project" value="TreeGrafter"/>
</dbReference>
<dbReference type="GO" id="GO:0006897">
    <property type="term" value="P:endocytosis"/>
    <property type="evidence" value="ECO:0007669"/>
    <property type="project" value="TreeGrafter"/>
</dbReference>
<dbReference type="CDD" id="cd01378">
    <property type="entry name" value="MYSc_Myo1"/>
    <property type="match status" value="1"/>
</dbReference>
<dbReference type="FunFam" id="1.10.10.820:FF:000001">
    <property type="entry name" value="Myosin heavy chain"/>
    <property type="match status" value="1"/>
</dbReference>
<dbReference type="FunFam" id="1.20.120.720:FF:000015">
    <property type="entry name" value="Myosin I"/>
    <property type="match status" value="1"/>
</dbReference>
<dbReference type="FunFam" id="1.20.5.4820:FF:000004">
    <property type="entry name" value="Myosin IE"/>
    <property type="match status" value="1"/>
</dbReference>
<dbReference type="FunFam" id="1.20.58.530:FF:000007">
    <property type="entry name" value="Myosin IE"/>
    <property type="match status" value="1"/>
</dbReference>
<dbReference type="Gene3D" id="1.10.10.820">
    <property type="match status" value="1"/>
</dbReference>
<dbReference type="Gene3D" id="1.20.5.4820">
    <property type="match status" value="1"/>
</dbReference>
<dbReference type="Gene3D" id="1.20.58.530">
    <property type="match status" value="1"/>
</dbReference>
<dbReference type="Gene3D" id="3.40.850.10">
    <property type="entry name" value="Kinesin motor domain"/>
    <property type="match status" value="1"/>
</dbReference>
<dbReference type="Gene3D" id="1.20.120.720">
    <property type="entry name" value="Myosin VI head, motor domain, U50 subdomain"/>
    <property type="match status" value="1"/>
</dbReference>
<dbReference type="Gene3D" id="2.30.30.40">
    <property type="entry name" value="SH3 Domains"/>
    <property type="match status" value="1"/>
</dbReference>
<dbReference type="InterPro" id="IPR036961">
    <property type="entry name" value="Kinesin_motor_dom_sf"/>
</dbReference>
<dbReference type="InterPro" id="IPR001609">
    <property type="entry name" value="Myosin_head_motor_dom-like"/>
</dbReference>
<dbReference type="InterPro" id="IPR010926">
    <property type="entry name" value="Myosin_TH1"/>
</dbReference>
<dbReference type="InterPro" id="IPR036072">
    <property type="entry name" value="MYSc_Myo1"/>
</dbReference>
<dbReference type="InterPro" id="IPR027417">
    <property type="entry name" value="P-loop_NTPase"/>
</dbReference>
<dbReference type="InterPro" id="IPR036028">
    <property type="entry name" value="SH3-like_dom_sf"/>
</dbReference>
<dbReference type="InterPro" id="IPR001452">
    <property type="entry name" value="SH3_domain"/>
</dbReference>
<dbReference type="PANTHER" id="PTHR13140">
    <property type="entry name" value="MYOSIN"/>
    <property type="match status" value="1"/>
</dbReference>
<dbReference type="PANTHER" id="PTHR13140:SF837">
    <property type="entry name" value="MYOSIN-3-RELATED"/>
    <property type="match status" value="1"/>
</dbReference>
<dbReference type="Pfam" id="PF00063">
    <property type="entry name" value="Myosin_head"/>
    <property type="match status" value="1"/>
</dbReference>
<dbReference type="Pfam" id="PF06017">
    <property type="entry name" value="Myosin_TH1"/>
    <property type="match status" value="1"/>
</dbReference>
<dbReference type="Pfam" id="PF00018">
    <property type="entry name" value="SH3_1"/>
    <property type="match status" value="1"/>
</dbReference>
<dbReference type="PRINTS" id="PR00193">
    <property type="entry name" value="MYOSINHEAVY"/>
</dbReference>
<dbReference type="SMART" id="SM00242">
    <property type="entry name" value="MYSc"/>
    <property type="match status" value="1"/>
</dbReference>
<dbReference type="SMART" id="SM00326">
    <property type="entry name" value="SH3"/>
    <property type="match status" value="1"/>
</dbReference>
<dbReference type="SUPFAM" id="SSF52540">
    <property type="entry name" value="P-loop containing nucleoside triphosphate hydrolases"/>
    <property type="match status" value="1"/>
</dbReference>
<dbReference type="SUPFAM" id="SSF50044">
    <property type="entry name" value="SH3-domain"/>
    <property type="match status" value="1"/>
</dbReference>
<dbReference type="PROSITE" id="PS51456">
    <property type="entry name" value="MYOSIN_MOTOR"/>
    <property type="match status" value="1"/>
</dbReference>
<dbReference type="PROSITE" id="PS50002">
    <property type="entry name" value="SH3"/>
    <property type="match status" value="1"/>
</dbReference>
<dbReference type="PROSITE" id="PS51757">
    <property type="entry name" value="TH1"/>
    <property type="match status" value="1"/>
</dbReference>
<protein>
    <recommendedName>
        <fullName>Myosin-1</fullName>
    </recommendedName>
    <alternativeName>
        <fullName>Class I unconventional myosin</fullName>
    </alternativeName>
    <alternativeName>
        <fullName>Type I myosin</fullName>
    </alternativeName>
</protein>
<gene>
    <name type="primary">MYO1</name>
    <name type="ORF">CC1G_13719</name>
</gene>
<keyword id="KW-0009">Actin-binding</keyword>
<keyword id="KW-0067">ATP-binding</keyword>
<keyword id="KW-0963">Cytoplasm</keyword>
<keyword id="KW-0206">Cytoskeleton</keyword>
<keyword id="KW-0378">Hydrolase</keyword>
<keyword id="KW-0505">Motor protein</keyword>
<keyword id="KW-0518">Myosin</keyword>
<keyword id="KW-0547">Nucleotide-binding</keyword>
<keyword id="KW-0597">Phosphoprotein</keyword>
<keyword id="KW-1185">Reference proteome</keyword>
<keyword id="KW-0677">Repeat</keyword>
<keyword id="KW-0728">SH3 domain</keyword>